<proteinExistence type="inferred from homology"/>
<gene>
    <name evidence="1" type="primary">atpE</name>
    <name type="ordered locus">MW2032</name>
</gene>
<feature type="chain" id="PRO_1000184506" description="ATP synthase subunit c">
    <location>
        <begin position="1"/>
        <end position="70"/>
    </location>
</feature>
<feature type="transmembrane region" description="Helical" evidence="1">
    <location>
        <begin position="4"/>
        <end position="24"/>
    </location>
</feature>
<feature type="transmembrane region" description="Helical" evidence="1">
    <location>
        <begin position="45"/>
        <end position="65"/>
    </location>
</feature>
<feature type="site" description="Reversibly protonated during proton transport" evidence="1">
    <location>
        <position position="54"/>
    </location>
</feature>
<keyword id="KW-0066">ATP synthesis</keyword>
<keyword id="KW-1003">Cell membrane</keyword>
<keyword id="KW-0138">CF(0)</keyword>
<keyword id="KW-0375">Hydrogen ion transport</keyword>
<keyword id="KW-0406">Ion transport</keyword>
<keyword id="KW-0446">Lipid-binding</keyword>
<keyword id="KW-0472">Membrane</keyword>
<keyword id="KW-0812">Transmembrane</keyword>
<keyword id="KW-1133">Transmembrane helix</keyword>
<keyword id="KW-0813">Transport</keyword>
<protein>
    <recommendedName>
        <fullName evidence="1">ATP synthase subunit c</fullName>
    </recommendedName>
    <alternativeName>
        <fullName evidence="1">ATP synthase F(0) sector subunit c</fullName>
    </alternativeName>
    <alternativeName>
        <fullName evidence="1">F-type ATPase subunit c</fullName>
        <shortName evidence="1">F-ATPase subunit c</shortName>
    </alternativeName>
    <alternativeName>
        <fullName evidence="1">Lipid-binding protein</fullName>
    </alternativeName>
</protein>
<accession>Q7A0C3</accession>
<evidence type="ECO:0000255" key="1">
    <source>
        <dbReference type="HAMAP-Rule" id="MF_01396"/>
    </source>
</evidence>
<reference key="1">
    <citation type="journal article" date="2002" name="Lancet">
        <title>Genome and virulence determinants of high virulence community-acquired MRSA.</title>
        <authorList>
            <person name="Baba T."/>
            <person name="Takeuchi F."/>
            <person name="Kuroda M."/>
            <person name="Yuzawa H."/>
            <person name="Aoki K."/>
            <person name="Oguchi A."/>
            <person name="Nagai Y."/>
            <person name="Iwama N."/>
            <person name="Asano K."/>
            <person name="Naimi T."/>
            <person name="Kuroda H."/>
            <person name="Cui L."/>
            <person name="Yamamoto K."/>
            <person name="Hiramatsu K."/>
        </authorList>
    </citation>
    <scope>NUCLEOTIDE SEQUENCE [LARGE SCALE GENOMIC DNA]</scope>
    <source>
        <strain>MW2</strain>
    </source>
</reference>
<organism>
    <name type="scientific">Staphylococcus aureus (strain MW2)</name>
    <dbReference type="NCBI Taxonomy" id="196620"/>
    <lineage>
        <taxon>Bacteria</taxon>
        <taxon>Bacillati</taxon>
        <taxon>Bacillota</taxon>
        <taxon>Bacilli</taxon>
        <taxon>Bacillales</taxon>
        <taxon>Staphylococcaceae</taxon>
        <taxon>Staphylococcus</taxon>
    </lineage>
</organism>
<name>ATPL_STAAW</name>
<sequence length="70" mass="6979">MNLIAAAIAIGLSALGAGIGNGLIVSRTVEGVARQPEARGQLMGIMFIGVGLVEALPIIGVVIAFMTFAG</sequence>
<dbReference type="EMBL" id="BA000033">
    <property type="protein sequence ID" value="BAB95897.1"/>
    <property type="molecule type" value="Genomic_DNA"/>
</dbReference>
<dbReference type="RefSeq" id="WP_001048816.1">
    <property type="nucleotide sequence ID" value="NC_003923.1"/>
</dbReference>
<dbReference type="SMR" id="Q7A0C3"/>
<dbReference type="GeneID" id="98346415"/>
<dbReference type="KEGG" id="sam:MW2032"/>
<dbReference type="HOGENOM" id="CLU_148047_1_1_9"/>
<dbReference type="GO" id="GO:0005886">
    <property type="term" value="C:plasma membrane"/>
    <property type="evidence" value="ECO:0007669"/>
    <property type="project" value="UniProtKB-SubCell"/>
</dbReference>
<dbReference type="GO" id="GO:0045259">
    <property type="term" value="C:proton-transporting ATP synthase complex"/>
    <property type="evidence" value="ECO:0007669"/>
    <property type="project" value="UniProtKB-KW"/>
</dbReference>
<dbReference type="GO" id="GO:0033177">
    <property type="term" value="C:proton-transporting two-sector ATPase complex, proton-transporting domain"/>
    <property type="evidence" value="ECO:0007669"/>
    <property type="project" value="InterPro"/>
</dbReference>
<dbReference type="GO" id="GO:0008289">
    <property type="term" value="F:lipid binding"/>
    <property type="evidence" value="ECO:0007669"/>
    <property type="project" value="UniProtKB-KW"/>
</dbReference>
<dbReference type="GO" id="GO:0046933">
    <property type="term" value="F:proton-transporting ATP synthase activity, rotational mechanism"/>
    <property type="evidence" value="ECO:0007669"/>
    <property type="project" value="UniProtKB-UniRule"/>
</dbReference>
<dbReference type="CDD" id="cd18185">
    <property type="entry name" value="ATP-synt_Fo_c_ATPE"/>
    <property type="match status" value="1"/>
</dbReference>
<dbReference type="FunFam" id="1.20.20.10:FF:000004">
    <property type="entry name" value="ATP synthase subunit c"/>
    <property type="match status" value="1"/>
</dbReference>
<dbReference type="Gene3D" id="1.20.20.10">
    <property type="entry name" value="F1F0 ATP synthase subunit C"/>
    <property type="match status" value="1"/>
</dbReference>
<dbReference type="HAMAP" id="MF_01396">
    <property type="entry name" value="ATP_synth_c_bact"/>
    <property type="match status" value="1"/>
</dbReference>
<dbReference type="InterPro" id="IPR005953">
    <property type="entry name" value="ATP_synth_csu_bac/chlpt"/>
</dbReference>
<dbReference type="InterPro" id="IPR000454">
    <property type="entry name" value="ATP_synth_F0_csu"/>
</dbReference>
<dbReference type="InterPro" id="IPR020537">
    <property type="entry name" value="ATP_synth_F0_csu_DDCD_BS"/>
</dbReference>
<dbReference type="InterPro" id="IPR038662">
    <property type="entry name" value="ATP_synth_F0_csu_sf"/>
</dbReference>
<dbReference type="InterPro" id="IPR002379">
    <property type="entry name" value="ATPase_proteolipid_c-like_dom"/>
</dbReference>
<dbReference type="InterPro" id="IPR035921">
    <property type="entry name" value="F/V-ATP_Csub_sf"/>
</dbReference>
<dbReference type="NCBIfam" id="TIGR01260">
    <property type="entry name" value="ATP_synt_c"/>
    <property type="match status" value="1"/>
</dbReference>
<dbReference type="NCBIfam" id="NF005363">
    <property type="entry name" value="PRK06876.1"/>
    <property type="match status" value="1"/>
</dbReference>
<dbReference type="Pfam" id="PF00137">
    <property type="entry name" value="ATP-synt_C"/>
    <property type="match status" value="1"/>
</dbReference>
<dbReference type="PRINTS" id="PR00124">
    <property type="entry name" value="ATPASEC"/>
</dbReference>
<dbReference type="SUPFAM" id="SSF81333">
    <property type="entry name" value="F1F0 ATP synthase subunit C"/>
    <property type="match status" value="1"/>
</dbReference>
<dbReference type="PROSITE" id="PS00605">
    <property type="entry name" value="ATPASE_C"/>
    <property type="match status" value="1"/>
</dbReference>
<comment type="function">
    <text evidence="1">F(1)F(0) ATP synthase produces ATP from ADP in the presence of a proton or sodium gradient. F-type ATPases consist of two structural domains, F(1) containing the extramembraneous catalytic core and F(0) containing the membrane proton channel, linked together by a central stalk and a peripheral stalk. During catalysis, ATP synthesis in the catalytic domain of F(1) is coupled via a rotary mechanism of the central stalk subunits to proton translocation.</text>
</comment>
<comment type="function">
    <text evidence="1">Key component of the F(0) channel; it plays a direct role in translocation across the membrane. A homomeric c-ring of between 10-14 subunits forms the central stalk rotor element with the F(1) delta and epsilon subunits.</text>
</comment>
<comment type="subunit">
    <text evidence="1">F-type ATPases have 2 components, F(1) - the catalytic core - and F(0) - the membrane proton channel. F(1) has five subunits: alpha(3), beta(3), gamma(1), delta(1), epsilon(1). F(0) has three main subunits: a(1), b(2) and c(10-14). The alpha and beta chains form an alternating ring which encloses part of the gamma chain. F(1) is attached to F(0) by a central stalk formed by the gamma and epsilon chains, while a peripheral stalk is formed by the delta and b chains.</text>
</comment>
<comment type="subcellular location">
    <subcellularLocation>
        <location evidence="1">Cell membrane</location>
        <topology evidence="1">Multi-pass membrane protein</topology>
    </subcellularLocation>
</comment>
<comment type="similarity">
    <text evidence="1">Belongs to the ATPase C chain family.</text>
</comment>